<dbReference type="EMBL" id="D00639">
    <property type="protein sequence ID" value="BAA00535.1"/>
    <property type="molecule type" value="Genomic_RNA"/>
</dbReference>
<dbReference type="PDB" id="1UF2">
    <property type="method" value="X-ray"/>
    <property type="resolution" value="3.50 A"/>
    <property type="chains" value="K=1-506"/>
</dbReference>
<dbReference type="PDBsum" id="1UF2"/>
<dbReference type="SMR" id="P22473"/>
<dbReference type="EvolutionaryTrace" id="P22473"/>
<dbReference type="GO" id="GO:0030430">
    <property type="term" value="C:host cell cytoplasm"/>
    <property type="evidence" value="ECO:0007669"/>
    <property type="project" value="UniProtKB-SubCell"/>
</dbReference>
<dbReference type="GO" id="GO:0019028">
    <property type="term" value="C:viral capsid"/>
    <property type="evidence" value="ECO:0007669"/>
    <property type="project" value="UniProtKB-KW"/>
</dbReference>
<dbReference type="GO" id="GO:0060090">
    <property type="term" value="F:molecular adaptor activity"/>
    <property type="evidence" value="ECO:0000269"/>
    <property type="project" value="DisProt"/>
</dbReference>
<dbReference type="GO" id="GO:0003723">
    <property type="term" value="F:RNA binding"/>
    <property type="evidence" value="ECO:0007669"/>
    <property type="project" value="UniProtKB-KW"/>
</dbReference>
<dbReference type="DisProt" id="DP02487"/>
<dbReference type="InterPro" id="IPR009873">
    <property type="entry name" value="Phytoreo_S7"/>
</dbReference>
<dbReference type="Pfam" id="PF07236">
    <property type="entry name" value="Phytoreo_S7"/>
    <property type="match status" value="1"/>
</dbReference>
<proteinExistence type="evidence at protein level"/>
<organismHost>
    <name type="scientific">Alopecurus aequalis</name>
    <dbReference type="NCBI Taxonomy" id="114194"/>
</organismHost>
<organismHost>
    <name type="scientific">Echinochloa crus-galli</name>
    <name type="common">Barnyard grass</name>
    <name type="synonym">Panicum crus-galli</name>
    <dbReference type="NCBI Taxonomy" id="90397"/>
</organismHost>
<organismHost>
    <name type="scientific">Nephotettix cincticeps</name>
    <name type="common">Green rice leafhopper</name>
    <name type="synonym">Selenocephalus cincticeps</name>
    <dbReference type="NCBI Taxonomy" id="94400"/>
</organismHost>
<organismHost>
    <name type="scientific">Oryza sativa</name>
    <name type="common">Rice</name>
    <dbReference type="NCBI Taxonomy" id="4530"/>
</organismHost>
<organismHost>
    <name type="scientific">Paspalum</name>
    <dbReference type="NCBI Taxonomy" id="147271"/>
</organismHost>
<sequence length="506" mass="55342">MSAIVGLCLLSEKVVLSRSLTDEVSKLYKLNRGNVKEPRKYATERMSTQSKPVALQVPVSTIILDYKNEDFIKQNPTYSAMDIIGSPSNTAPQTAFQSIMPSLSALFNTPFIQGAFRHRIISSMGPEISYLVMVIGPPSGFMDTPNVSSAQSSVHTVSNADVDLNDIIAINSTMAKSTKLVSASTLQAMLVNDVYDRCMDLDGILLSQALPFFRNYVNVQSKGSLPPAVAACLNTPIKELFSMGSGKREPLALEFRKDNEGQCIGIVLPKGHEGDTLSSRYPAVFINESEPFSDKERSELSELKRTDSDAYEKLYSETISKHVSDGSYGNRVIISHKMSRLSNGGVKIIGRFKISDFNTVKKNLSSRSGEIDSAKEQWEALSGNGLVTDSNISMLHDKILDTITSNKPGVVLRDGNKKSENIVVCFKNGFPNKKHSLLQLTKNGISVVSLDELTDAGILVESTGPDRVRRSPKVLANKLSSFKGRKVTLDVDNMSTEALIQKLSTL</sequence>
<reference key="1">
    <citation type="journal article" date="1990" name="J. Gen. Virol.">
        <title>Sequence analysis and product assignment of segment 7 of the rice dwarf virus genome.</title>
        <authorList>
            <person name="Nakashima K."/>
            <person name="Kakutani T."/>
            <person name="Minobe Y."/>
        </authorList>
    </citation>
    <scope>NUCLEOTIDE SEQUENCE [GENOMIC RNA]</scope>
</reference>
<reference key="2">
    <citation type="journal article" date="2003" name="Structure">
        <title>The atomic structure of rice dwarf virus reveals the self-assembly mechanism of component proteins.</title>
        <authorList>
            <person name="Nakagawa A."/>
            <person name="Miyazaki N."/>
            <person name="Taka J."/>
            <person name="Naitow H."/>
            <person name="Ogawa A."/>
            <person name="Fujimoto Z."/>
            <person name="Mizuno H."/>
            <person name="Higashi T."/>
            <person name="Watanabe Y."/>
            <person name="Omura T."/>
            <person name="Cheng R.H."/>
            <person name="Tsukihara T."/>
        </authorList>
    </citation>
    <scope>X-RAY CRYSTALLOGRAPHY (3.5 ANGSTROMS)</scope>
</reference>
<reference key="3">
    <citation type="journal article" date="2005" name="Acta Biochim. Biophys. Sin.">
        <title>RNA-binding domain of the key structural protein P7 for the Rice dwarf virus particle assembly.</title>
        <authorList>
            <person name="Zhong B.X."/>
            <person name="Shen Y.W."/>
            <person name="Omura T."/>
        </authorList>
    </citation>
    <scope>PROTEIN SEQUENCE OF 1-12; 22-33; 82-99; 128-137; 193-210; 240-259; 300-334; 356-370; 380-391; 414-432 AND 453-476</scope>
    <scope>IDENTIFICATION</scope>
    <scope>RNA-BINDING</scope>
</reference>
<reference key="4">
    <citation type="journal article" date="2010" name="J. Biochem.">
        <title>The functional organization of the internal components of Rice dwarf virus.</title>
        <authorList>
            <person name="Miyazaki N."/>
            <person name="Wu B."/>
            <person name="Hagiwara K."/>
            <person name="Wang C.Y."/>
            <person name="Xing L."/>
            <person name="Hammar L."/>
            <person name="Higashiura A."/>
            <person name="Tsukihara T."/>
            <person name="Nakagawa A."/>
            <person name="Omura T."/>
            <person name="Cheng R.H."/>
        </authorList>
    </citation>
    <scope>FUNCTION</scope>
    <scope>SUBCELLULAR LOCATION</scope>
</reference>
<accession>P22473</accession>
<name>P7_RDVO</name>
<evidence type="ECO:0000250" key="1"/>
<evidence type="ECO:0000269" key="2">
    <source>
    </source>
</evidence>
<evidence type="ECO:0000305" key="3"/>
<evidence type="ECO:0000305" key="4">
    <source>
    </source>
</evidence>
<evidence type="ECO:0007829" key="5">
    <source>
        <dbReference type="PDB" id="1UF2"/>
    </source>
</evidence>
<feature type="chain" id="PRO_0000222792" description="Protein P7">
    <location>
        <begin position="1"/>
        <end position="506"/>
    </location>
</feature>
<feature type="region of interest" description="RNA-binding">
    <location>
        <begin position="128"/>
        <end position="249"/>
    </location>
</feature>
<feature type="region of interest" description="RNA-binding">
    <location>
        <begin position="325"/>
        <end position="355"/>
    </location>
</feature>
<feature type="strand" evidence="5">
    <location>
        <begin position="292"/>
        <end position="297"/>
    </location>
</feature>
<protein>
    <recommendedName>
        <fullName>Protein P7</fullName>
    </recommendedName>
    <alternativeName>
        <fullName>55 kDa core protein</fullName>
    </alternativeName>
</protein>
<comment type="function">
    <text evidence="2">Probable component of the transcriptional machinery present in the inner capsid. Displays dsRNA binding activity and may play an important role in the sorting of viral RNA and virion assembly. Together with the RNA-directed RNA polymerase P1 and capping enzyme P5, forms an transcriptional complex positioned near the channels situated at each of the five-fold vertices of the core.</text>
</comment>
<comment type="subcellular location">
    <subcellularLocation>
        <location evidence="4">Virion</location>
    </subcellularLocation>
    <subcellularLocation>
        <location evidence="1">Host cytoplasm</location>
    </subcellularLocation>
    <text evidence="1">Located inside the inner capsid. Found in the interior of spherical cytoplasmic structures, called virus factories, that appear early after infection and are the site of viral replication and packaging (By similarity).</text>
</comment>
<comment type="similarity">
    <text evidence="3">Belongs to the phytoreovirus protein P7 family.</text>
</comment>
<comment type="online information" name="Virus Particle ExploreR db">
    <link uri="https://viperdb.org/Info_Page.php?VDB=1uf2"/>
    <text>Icosahedral capsid structure</text>
</comment>
<organism>
    <name type="scientific">Rice dwarf virus (isolate O)</name>
    <name type="common">RDV</name>
    <dbReference type="NCBI Taxonomy" id="142805"/>
    <lineage>
        <taxon>Viruses</taxon>
        <taxon>Riboviria</taxon>
        <taxon>Orthornavirae</taxon>
        <taxon>Duplornaviricota</taxon>
        <taxon>Resentoviricetes</taxon>
        <taxon>Reovirales</taxon>
        <taxon>Sedoreoviridae</taxon>
        <taxon>Phytoreovirus</taxon>
        <taxon>Rice dwarf virus</taxon>
    </lineage>
</organism>
<keyword id="KW-0002">3D-structure</keyword>
<keyword id="KW-0167">Capsid protein</keyword>
<keyword id="KW-0903">Direct protein sequencing</keyword>
<keyword id="KW-1035">Host cytoplasm</keyword>
<keyword id="KW-0694">RNA-binding</keyword>
<keyword id="KW-0946">Virion</keyword>